<keyword id="KW-0687">Ribonucleoprotein</keyword>
<keyword id="KW-0689">Ribosomal protein</keyword>
<gene>
    <name evidence="1" type="primary">rpmF</name>
    <name type="ordered locus">BamMC406_0999</name>
</gene>
<proteinExistence type="inferred from homology"/>
<feature type="chain" id="PRO_1000120097" description="Large ribosomal subunit protein bL32">
    <location>
        <begin position="1"/>
        <end position="59"/>
    </location>
</feature>
<feature type="region of interest" description="Disordered" evidence="2">
    <location>
        <begin position="1"/>
        <end position="23"/>
    </location>
</feature>
<feature type="region of interest" description="Disordered" evidence="2">
    <location>
        <begin position="35"/>
        <end position="59"/>
    </location>
</feature>
<feature type="compositionally biased region" description="Basic residues" evidence="2">
    <location>
        <begin position="49"/>
        <end position="59"/>
    </location>
</feature>
<dbReference type="EMBL" id="CP001025">
    <property type="protein sequence ID" value="ACB63490.1"/>
    <property type="molecule type" value="Genomic_DNA"/>
</dbReference>
<dbReference type="RefSeq" id="WP_006051932.1">
    <property type="nucleotide sequence ID" value="NC_010551.1"/>
</dbReference>
<dbReference type="SMR" id="B1YVK9"/>
<dbReference type="GeneID" id="98102466"/>
<dbReference type="KEGG" id="bac:BamMC406_0999"/>
<dbReference type="HOGENOM" id="CLU_129084_2_1_4"/>
<dbReference type="OrthoDB" id="9801927at2"/>
<dbReference type="Proteomes" id="UP000001680">
    <property type="component" value="Chromosome 1"/>
</dbReference>
<dbReference type="GO" id="GO:0015934">
    <property type="term" value="C:large ribosomal subunit"/>
    <property type="evidence" value="ECO:0007669"/>
    <property type="project" value="InterPro"/>
</dbReference>
<dbReference type="GO" id="GO:0003735">
    <property type="term" value="F:structural constituent of ribosome"/>
    <property type="evidence" value="ECO:0007669"/>
    <property type="project" value="InterPro"/>
</dbReference>
<dbReference type="GO" id="GO:0006412">
    <property type="term" value="P:translation"/>
    <property type="evidence" value="ECO:0007669"/>
    <property type="project" value="UniProtKB-UniRule"/>
</dbReference>
<dbReference type="HAMAP" id="MF_00340">
    <property type="entry name" value="Ribosomal_bL32"/>
    <property type="match status" value="1"/>
</dbReference>
<dbReference type="InterPro" id="IPR002677">
    <property type="entry name" value="Ribosomal_bL32"/>
</dbReference>
<dbReference type="InterPro" id="IPR044957">
    <property type="entry name" value="Ribosomal_bL32_bact"/>
</dbReference>
<dbReference type="InterPro" id="IPR011332">
    <property type="entry name" value="Ribosomal_zn-bd"/>
</dbReference>
<dbReference type="NCBIfam" id="TIGR01031">
    <property type="entry name" value="rpmF_bact"/>
    <property type="match status" value="1"/>
</dbReference>
<dbReference type="PANTHER" id="PTHR35534">
    <property type="entry name" value="50S RIBOSOMAL PROTEIN L32"/>
    <property type="match status" value="1"/>
</dbReference>
<dbReference type="PANTHER" id="PTHR35534:SF1">
    <property type="entry name" value="LARGE RIBOSOMAL SUBUNIT PROTEIN BL32"/>
    <property type="match status" value="1"/>
</dbReference>
<dbReference type="Pfam" id="PF01783">
    <property type="entry name" value="Ribosomal_L32p"/>
    <property type="match status" value="1"/>
</dbReference>
<dbReference type="SUPFAM" id="SSF57829">
    <property type="entry name" value="Zn-binding ribosomal proteins"/>
    <property type="match status" value="1"/>
</dbReference>
<sequence>MAVQQNKKSPSKRGMHRSHDFLTAAPLAVEPSTGEVHLRHHVSPNGYYRGKKVVKTKND</sequence>
<protein>
    <recommendedName>
        <fullName evidence="1">Large ribosomal subunit protein bL32</fullName>
    </recommendedName>
    <alternativeName>
        <fullName evidence="3">50S ribosomal protein L32</fullName>
    </alternativeName>
</protein>
<organism>
    <name type="scientific">Burkholderia ambifaria (strain MC40-6)</name>
    <dbReference type="NCBI Taxonomy" id="398577"/>
    <lineage>
        <taxon>Bacteria</taxon>
        <taxon>Pseudomonadati</taxon>
        <taxon>Pseudomonadota</taxon>
        <taxon>Betaproteobacteria</taxon>
        <taxon>Burkholderiales</taxon>
        <taxon>Burkholderiaceae</taxon>
        <taxon>Burkholderia</taxon>
        <taxon>Burkholderia cepacia complex</taxon>
    </lineage>
</organism>
<accession>B1YVK9</accession>
<reference key="1">
    <citation type="submission" date="2008-04" db="EMBL/GenBank/DDBJ databases">
        <title>Complete sequence of chromosome 1 of Burkholderia ambifaria MC40-6.</title>
        <authorList>
            <person name="Copeland A."/>
            <person name="Lucas S."/>
            <person name="Lapidus A."/>
            <person name="Glavina del Rio T."/>
            <person name="Dalin E."/>
            <person name="Tice H."/>
            <person name="Pitluck S."/>
            <person name="Chain P."/>
            <person name="Malfatti S."/>
            <person name="Shin M."/>
            <person name="Vergez L."/>
            <person name="Lang D."/>
            <person name="Schmutz J."/>
            <person name="Larimer F."/>
            <person name="Land M."/>
            <person name="Hauser L."/>
            <person name="Kyrpides N."/>
            <person name="Lykidis A."/>
            <person name="Ramette A."/>
            <person name="Konstantinidis K."/>
            <person name="Tiedje J."/>
            <person name="Richardson P."/>
        </authorList>
    </citation>
    <scope>NUCLEOTIDE SEQUENCE [LARGE SCALE GENOMIC DNA]</scope>
    <source>
        <strain>MC40-6</strain>
    </source>
</reference>
<evidence type="ECO:0000255" key="1">
    <source>
        <dbReference type="HAMAP-Rule" id="MF_00340"/>
    </source>
</evidence>
<evidence type="ECO:0000256" key="2">
    <source>
        <dbReference type="SAM" id="MobiDB-lite"/>
    </source>
</evidence>
<evidence type="ECO:0000305" key="3"/>
<comment type="similarity">
    <text evidence="1">Belongs to the bacterial ribosomal protein bL32 family.</text>
</comment>
<name>RL32_BURA4</name>